<gene>
    <name type="primary">Telo2</name>
    <name type="synonym">Kiaa0683</name>
</gene>
<proteinExistence type="evidence at protein level"/>
<reference key="1">
    <citation type="journal article" date="2005" name="Science">
        <title>The transcriptional landscape of the mammalian genome.</title>
        <authorList>
            <person name="Carninci P."/>
            <person name="Kasukawa T."/>
            <person name="Katayama S."/>
            <person name="Gough J."/>
            <person name="Frith M.C."/>
            <person name="Maeda N."/>
            <person name="Oyama R."/>
            <person name="Ravasi T."/>
            <person name="Lenhard B."/>
            <person name="Wells C."/>
            <person name="Kodzius R."/>
            <person name="Shimokawa K."/>
            <person name="Bajic V.B."/>
            <person name="Brenner S.E."/>
            <person name="Batalov S."/>
            <person name="Forrest A.R."/>
            <person name="Zavolan M."/>
            <person name="Davis M.J."/>
            <person name="Wilming L.G."/>
            <person name="Aidinis V."/>
            <person name="Allen J.E."/>
            <person name="Ambesi-Impiombato A."/>
            <person name="Apweiler R."/>
            <person name="Aturaliya R.N."/>
            <person name="Bailey T.L."/>
            <person name="Bansal M."/>
            <person name="Baxter L."/>
            <person name="Beisel K.W."/>
            <person name="Bersano T."/>
            <person name="Bono H."/>
            <person name="Chalk A.M."/>
            <person name="Chiu K.P."/>
            <person name="Choudhary V."/>
            <person name="Christoffels A."/>
            <person name="Clutterbuck D.R."/>
            <person name="Crowe M.L."/>
            <person name="Dalla E."/>
            <person name="Dalrymple B.P."/>
            <person name="de Bono B."/>
            <person name="Della Gatta G."/>
            <person name="di Bernardo D."/>
            <person name="Down T."/>
            <person name="Engstrom P."/>
            <person name="Fagiolini M."/>
            <person name="Faulkner G."/>
            <person name="Fletcher C.F."/>
            <person name="Fukushima T."/>
            <person name="Furuno M."/>
            <person name="Futaki S."/>
            <person name="Gariboldi M."/>
            <person name="Georgii-Hemming P."/>
            <person name="Gingeras T.R."/>
            <person name="Gojobori T."/>
            <person name="Green R.E."/>
            <person name="Gustincich S."/>
            <person name="Harbers M."/>
            <person name="Hayashi Y."/>
            <person name="Hensch T.K."/>
            <person name="Hirokawa N."/>
            <person name="Hill D."/>
            <person name="Huminiecki L."/>
            <person name="Iacono M."/>
            <person name="Ikeo K."/>
            <person name="Iwama A."/>
            <person name="Ishikawa T."/>
            <person name="Jakt M."/>
            <person name="Kanapin A."/>
            <person name="Katoh M."/>
            <person name="Kawasawa Y."/>
            <person name="Kelso J."/>
            <person name="Kitamura H."/>
            <person name="Kitano H."/>
            <person name="Kollias G."/>
            <person name="Krishnan S.P."/>
            <person name="Kruger A."/>
            <person name="Kummerfeld S.K."/>
            <person name="Kurochkin I.V."/>
            <person name="Lareau L.F."/>
            <person name="Lazarevic D."/>
            <person name="Lipovich L."/>
            <person name="Liu J."/>
            <person name="Liuni S."/>
            <person name="McWilliam S."/>
            <person name="Madan Babu M."/>
            <person name="Madera M."/>
            <person name="Marchionni L."/>
            <person name="Matsuda H."/>
            <person name="Matsuzawa S."/>
            <person name="Miki H."/>
            <person name="Mignone F."/>
            <person name="Miyake S."/>
            <person name="Morris K."/>
            <person name="Mottagui-Tabar S."/>
            <person name="Mulder N."/>
            <person name="Nakano N."/>
            <person name="Nakauchi H."/>
            <person name="Ng P."/>
            <person name="Nilsson R."/>
            <person name="Nishiguchi S."/>
            <person name="Nishikawa S."/>
            <person name="Nori F."/>
            <person name="Ohara O."/>
            <person name="Okazaki Y."/>
            <person name="Orlando V."/>
            <person name="Pang K.C."/>
            <person name="Pavan W.J."/>
            <person name="Pavesi G."/>
            <person name="Pesole G."/>
            <person name="Petrovsky N."/>
            <person name="Piazza S."/>
            <person name="Reed J."/>
            <person name="Reid J.F."/>
            <person name="Ring B.Z."/>
            <person name="Ringwald M."/>
            <person name="Rost B."/>
            <person name="Ruan Y."/>
            <person name="Salzberg S.L."/>
            <person name="Sandelin A."/>
            <person name="Schneider C."/>
            <person name="Schoenbach C."/>
            <person name="Sekiguchi K."/>
            <person name="Semple C.A."/>
            <person name="Seno S."/>
            <person name="Sessa L."/>
            <person name="Sheng Y."/>
            <person name="Shibata Y."/>
            <person name="Shimada H."/>
            <person name="Shimada K."/>
            <person name="Silva D."/>
            <person name="Sinclair B."/>
            <person name="Sperling S."/>
            <person name="Stupka E."/>
            <person name="Sugiura K."/>
            <person name="Sultana R."/>
            <person name="Takenaka Y."/>
            <person name="Taki K."/>
            <person name="Tammoja K."/>
            <person name="Tan S.L."/>
            <person name="Tang S."/>
            <person name="Taylor M.S."/>
            <person name="Tegner J."/>
            <person name="Teichmann S.A."/>
            <person name="Ueda H.R."/>
            <person name="van Nimwegen E."/>
            <person name="Verardo R."/>
            <person name="Wei C.L."/>
            <person name="Yagi K."/>
            <person name="Yamanishi H."/>
            <person name="Zabarovsky E."/>
            <person name="Zhu S."/>
            <person name="Zimmer A."/>
            <person name="Hide W."/>
            <person name="Bult C."/>
            <person name="Grimmond S.M."/>
            <person name="Teasdale R.D."/>
            <person name="Liu E.T."/>
            <person name="Brusic V."/>
            <person name="Quackenbush J."/>
            <person name="Wahlestedt C."/>
            <person name="Mattick J.S."/>
            <person name="Hume D.A."/>
            <person name="Kai C."/>
            <person name="Sasaki D."/>
            <person name="Tomaru Y."/>
            <person name="Fukuda S."/>
            <person name="Kanamori-Katayama M."/>
            <person name="Suzuki M."/>
            <person name="Aoki J."/>
            <person name="Arakawa T."/>
            <person name="Iida J."/>
            <person name="Imamura K."/>
            <person name="Itoh M."/>
            <person name="Kato T."/>
            <person name="Kawaji H."/>
            <person name="Kawagashira N."/>
            <person name="Kawashima T."/>
            <person name="Kojima M."/>
            <person name="Kondo S."/>
            <person name="Konno H."/>
            <person name="Nakano K."/>
            <person name="Ninomiya N."/>
            <person name="Nishio T."/>
            <person name="Okada M."/>
            <person name="Plessy C."/>
            <person name="Shibata K."/>
            <person name="Shiraki T."/>
            <person name="Suzuki S."/>
            <person name="Tagami M."/>
            <person name="Waki K."/>
            <person name="Watahiki A."/>
            <person name="Okamura-Oho Y."/>
            <person name="Suzuki H."/>
            <person name="Kawai J."/>
            <person name="Hayashizaki Y."/>
        </authorList>
    </citation>
    <scope>NUCLEOTIDE SEQUENCE [LARGE SCALE MRNA] (ISOFORMS 1 AND 2)</scope>
    <source>
        <strain>C57BL/6J</strain>
        <strain>NOD</strain>
        <tissue>Kidney</tissue>
        <tissue>Lung</tissue>
        <tissue>Skin</tissue>
        <tissue>Spleen</tissue>
    </source>
</reference>
<reference key="2">
    <citation type="submission" date="2003-11" db="EMBL/GenBank/DDBJ databases">
        <title>Genomic sequence analysis in the mouse T-complex region.</title>
        <authorList>
            <person name="Brathwaite M."/>
            <person name="Waeltz P."/>
            <person name="Dudekula D."/>
            <person name="Nagaraja R."/>
        </authorList>
    </citation>
    <scope>NUCLEOTIDE SEQUENCE [LARGE SCALE GENOMIC DNA]</scope>
</reference>
<reference key="3">
    <citation type="journal article" date="2004" name="Genome Res.">
        <title>The status, quality, and expansion of the NIH full-length cDNA project: the Mammalian Gene Collection (MGC).</title>
        <authorList>
            <consortium name="The MGC Project Team"/>
        </authorList>
    </citation>
    <scope>NUCLEOTIDE SEQUENCE [LARGE SCALE MRNA] (ISOFORM 1)</scope>
    <source>
        <tissue>Mammary tumor</tissue>
    </source>
</reference>
<reference key="4">
    <citation type="journal article" date="2004" name="Mol. Cell. Proteomics">
        <title>Phosphoproteomic analysis of the developing mouse brain.</title>
        <authorList>
            <person name="Ballif B.A."/>
            <person name="Villen J."/>
            <person name="Beausoleil S.A."/>
            <person name="Schwartz D."/>
            <person name="Gygi S.P."/>
        </authorList>
    </citation>
    <scope>PHOSPHORYLATION [LARGE SCALE ANALYSIS] AT SER-457</scope>
    <scope>IDENTIFICATION BY MASS SPECTROMETRY [LARGE SCALE ANALYSIS]</scope>
    <source>
        <tissue>Embryonic brain</tissue>
    </source>
</reference>
<reference key="5">
    <citation type="journal article" date="2010" name="Genes Dev.">
        <title>Tel2 structure and function in the Hsp90-dependent maturation of mTOR and ATR complexes.</title>
        <authorList>
            <person name="Takai H."/>
            <person name="Xie Y."/>
            <person name="de Lange T."/>
            <person name="Pavletich N.P."/>
        </authorList>
    </citation>
    <scope>MUTAGENESIS OF LEU-395; 395-LEU--MET-407; 395-LEU--LEU-424; MET-407; 407-MET--LEU-424 AND LEU-424</scope>
</reference>
<reference key="6">
    <citation type="journal article" date="2014" name="Structure">
        <title>Structural basis for phosphorylation-dependent recruitment of Tel2 to Hsp90 by Pih1.</title>
        <authorList>
            <person name="Pal M."/>
            <person name="Morgan M."/>
            <person name="Phelps S.E."/>
            <person name="Roe S.M."/>
            <person name="Parry-Morris S."/>
            <person name="Downs J.A."/>
            <person name="Polier S."/>
            <person name="Pearl L.H."/>
            <person name="Prodromou C."/>
        </authorList>
    </citation>
    <scope>X-RAY CRYSTALLOGRAPHY (3.0 ANGSTROMS) OF 488-496 IN COMPLEX WITH PIH1D1</scope>
    <scope>INTERACTION WITH PIH1D1</scope>
</reference>
<sequence>MDPALSAVRLTVQEAIHILSSSEDAGHILSTLGTLKRYLGGTEDPVLPEEKEEFATVHFSAVLRCLVSKLSPGWLELSPGGQLERLWESFFLDGPPDQAFLVLMEAIESTAGPSFRLMKMAQLLDTFLSTGRVAALMEEQCRPQTKPSFPLFQETLLSKVVGLPDLLGNCLQRDNLTQFFPQNYFPLLGQEVVQALKAVVNFLQDGLDCSVSFVSRVLGKVCIQGRKREILSVLVPQLTVLTQDSCLWQRVCWRLVEQVPDRAVEAVLTGLVEAAPRPEVLSRLLGNLVVKNKKARFVVTRKLLLLQYQHTTPMVQSLLGYLALDSQRRPLLIQVLKELLETWGCSSAVRHTPLEQQCYISKAILVCLAHLGEPELQDIRDELLASMMAGVKCRLDSSLPPVRRLGMIVAEVISSRIHPEGPLLKFQYEDDEMSRELLALATPEPAGDCSSVSRGPSPAPVDTESPVEMPEKAVESDVPPTQPQGSDSELDSDDEFIPYDMSGDRELKSSKEPLYIRDCVEALTTSEDMERWEASLKGLEGLVYRSPTATREVSVELAKVLLHLEEKTCVAEFEQLRQSALVAVTVTDPEQVAKYLTSQFYGLNYSLRQRMDILDVLVLAAQALSRPKSLQRRSQHGPPVPGTMCSPALAVSQTGNVAAPDWQVVVEERIRSKTRRFSKGCPQRELSGVPNEFSSVAGYFFFPLLQHFDRPLVTFDLLGDDQLVLGRLTHTLASLMYLAVNTTVAVPMGKALLEFVWALRFHVDIYVRRGLLSAVSSVLLSVPTERLLGDLPDELLEARSWLADVAEKDVDEDCRELAVRALLLLERLKDKLLSSSSPQP</sequence>
<accession>Q9DC40</accession>
<accession>Q3U3J5</accession>
<accession>Q3UID7</accession>
<accession>Q3UP41</accession>
<accession>Q8BN03</accession>
<accession>Q8C1T3</accession>
<accession>Q91VQ3</accession>
<comment type="function">
    <text evidence="1">Regulator of the DNA damage response (DDR). Part of the TTT complex that is required to stabilize protein levels of the phosphatidylinositol 3-kinase-related protein kinase (PIKK) family proteins. The TTT complex is involved in the cellular resistance to DNA damage stresses, like ionizing radiation (IR), ultraviolet (UV) and mitomycin C (MMC). Together with the TTT complex and HSP90 may participate in the proper folding of newly synthesized PIKKs. Promotes assembly, stabilizes and maintains the activity of mTORC1 and mTORC2 complexes, which regulate cell growth and survival in response to nutrient and hormonal signals. May be involved in telomere length regulation (By similarity).</text>
</comment>
<comment type="subunit">
    <text evidence="2 5">Component of the TTT complex composed of TELO2, TTI1 and TTI2. Interacts with ATM, ATR, MTOR, PRKDC, RUVBL2, TTI1, TTI2, SMG1 and TRRAP. Component of the mTORC1 and mTORC2 complexes. Interacts (phosphorylated form) with PIH1D1 (PubMed:24794838). Interaction with PIH1D1 mediates interaction of TELO2 with the R2TP complex composed of RUVBL1, RUVBL2, PIH1D1, and RPAP3 (By similarity).</text>
</comment>
<comment type="interaction">
    <interactant intactId="EBI-1571482">
        <id>Q9DC40</id>
    </interactant>
    <interactant intactId="EBI-11658528">
        <id>Q9CQJ2</id>
        <label>Pih1d1</label>
    </interactant>
    <organismsDiffer>false</organismsDiffer>
    <experiments>3</experiments>
</comment>
<comment type="subcellular location">
    <subcellularLocation>
        <location evidence="1">Cytoplasm</location>
    </subcellularLocation>
    <subcellularLocation>
        <location evidence="1">Membrane</location>
    </subcellularLocation>
    <subcellularLocation>
        <location evidence="1">Nucleus</location>
    </subcellularLocation>
    <subcellularLocation>
        <location evidence="7">Chromosome</location>
        <location evidence="7">Telomere</location>
    </subcellularLocation>
</comment>
<comment type="alternative products">
    <event type="alternative splicing"/>
    <isoform>
        <id>Q9DC40-1</id>
        <name>1</name>
        <sequence type="displayed"/>
    </isoform>
    <isoform>
        <id>Q9DC40-2</id>
        <name>2</name>
        <sequence type="described" ref="VSP_031207 VSP_031208 VSP_031209"/>
    </isoform>
</comment>
<comment type="PTM">
    <text evidence="1">Hydroxylation by PHD3 is required for a proper interaction with ATR, and activation of the ATR/CHK1/p53 pathway following DNA damage.</text>
</comment>
<comment type="PTM">
    <text evidence="1">Phosphorylated at Ser-486 by CK2 following growth factor deprivation, leading to its subsequent ubiquitination by the SCF(FBXO9) complex. Phosphorylation by CK2 only takes place when TELO2 is bound to mTORC1, not mTORC2; leading to selective ubiquitination of mTORC1-associated protein (By similarity).</text>
</comment>
<comment type="PTM">
    <text evidence="1">Ubiquitinated by the SCF(FBXO9) complex following phosphorylation by CK2 in response to growth factor deprivation, leading to its degradation by the proteasome. Only mTORC1-associated protein is ubiquitinated and degraded, leading to selective inactivation of mTORC1 to restrain cell growth and protein translation, while mTORC2 is activated due to the relief of feedback inhibition by mTORC1 (By similarity).</text>
</comment>
<comment type="similarity">
    <text evidence="7">Belongs to the TEL2 family.</text>
</comment>
<comment type="sequence caution" evidence="7">
    <conflict type="erroneous termination">
        <sequence resource="EMBL-CDS" id="BAE25556"/>
    </conflict>
    <text>Truncated C-terminus.</text>
</comment>
<name>TELO2_MOUSE</name>
<evidence type="ECO:0000250" key="1"/>
<evidence type="ECO:0000250" key="2">
    <source>
        <dbReference type="UniProtKB" id="Q9Y4R8"/>
    </source>
</evidence>
<evidence type="ECO:0000256" key="3">
    <source>
        <dbReference type="SAM" id="MobiDB-lite"/>
    </source>
</evidence>
<evidence type="ECO:0000269" key="4">
    <source>
    </source>
</evidence>
<evidence type="ECO:0000269" key="5">
    <source>
    </source>
</evidence>
<evidence type="ECO:0000303" key="6">
    <source>
    </source>
</evidence>
<evidence type="ECO:0000305" key="7"/>
<evidence type="ECO:0007744" key="8">
    <source>
    </source>
</evidence>
<evidence type="ECO:0007829" key="9">
    <source>
        <dbReference type="PDB" id="4CSE"/>
    </source>
</evidence>
<organism>
    <name type="scientific">Mus musculus</name>
    <name type="common">Mouse</name>
    <dbReference type="NCBI Taxonomy" id="10090"/>
    <lineage>
        <taxon>Eukaryota</taxon>
        <taxon>Metazoa</taxon>
        <taxon>Chordata</taxon>
        <taxon>Craniata</taxon>
        <taxon>Vertebrata</taxon>
        <taxon>Euteleostomi</taxon>
        <taxon>Mammalia</taxon>
        <taxon>Eutheria</taxon>
        <taxon>Euarchontoglires</taxon>
        <taxon>Glires</taxon>
        <taxon>Rodentia</taxon>
        <taxon>Myomorpha</taxon>
        <taxon>Muroidea</taxon>
        <taxon>Muridae</taxon>
        <taxon>Murinae</taxon>
        <taxon>Mus</taxon>
        <taxon>Mus</taxon>
    </lineage>
</organism>
<dbReference type="EMBL" id="AK004582">
    <property type="protein sequence ID" value="BAB23388.1"/>
    <property type="molecule type" value="mRNA"/>
</dbReference>
<dbReference type="EMBL" id="AK045321">
    <property type="protein sequence ID" value="BAC32309.1"/>
    <property type="molecule type" value="mRNA"/>
</dbReference>
<dbReference type="EMBL" id="AK028658">
    <property type="protein sequence ID" value="BAC26051.1"/>
    <property type="molecule type" value="mRNA"/>
</dbReference>
<dbReference type="EMBL" id="AK143827">
    <property type="protein sequence ID" value="BAE25556.1"/>
    <property type="status" value="ALT_SEQ"/>
    <property type="molecule type" value="mRNA"/>
</dbReference>
<dbReference type="EMBL" id="AK146963">
    <property type="protein sequence ID" value="BAE27569.1"/>
    <property type="molecule type" value="mRNA"/>
</dbReference>
<dbReference type="EMBL" id="AK154727">
    <property type="protein sequence ID" value="BAE32791.1"/>
    <property type="molecule type" value="mRNA"/>
</dbReference>
<dbReference type="EMBL" id="AY491413">
    <property type="protein sequence ID" value="AAS21644.1"/>
    <property type="molecule type" value="Genomic_DNA"/>
</dbReference>
<dbReference type="EMBL" id="BC011077">
    <property type="protein sequence ID" value="AAH11077.1"/>
    <property type="molecule type" value="mRNA"/>
</dbReference>
<dbReference type="CCDS" id="CCDS28507.1">
    <molecule id="Q9DC40-1"/>
</dbReference>
<dbReference type="RefSeq" id="NP_001157133.1">
    <molecule id="Q9DC40-1"/>
    <property type="nucleotide sequence ID" value="NM_001163661.1"/>
</dbReference>
<dbReference type="RefSeq" id="NP_082156.2">
    <molecule id="Q9DC40-1"/>
    <property type="nucleotide sequence ID" value="NM_027880.2"/>
</dbReference>
<dbReference type="PDB" id="4CKT">
    <property type="method" value="X-ray"/>
    <property type="resolution" value="3.00 A"/>
    <property type="chains" value="C/D=489-496"/>
</dbReference>
<dbReference type="PDB" id="4CSE">
    <property type="method" value="X-ray"/>
    <property type="resolution" value="3.30 A"/>
    <property type="chains" value="C/D=488-496"/>
</dbReference>
<dbReference type="PDBsum" id="4CKT"/>
<dbReference type="PDBsum" id="4CSE"/>
<dbReference type="SMR" id="Q9DC40"/>
<dbReference type="BioGRID" id="214877">
    <property type="interactions" value="5"/>
</dbReference>
<dbReference type="DIP" id="DIP-60997N"/>
<dbReference type="FunCoup" id="Q9DC40">
    <property type="interactions" value="2109"/>
</dbReference>
<dbReference type="IntAct" id="Q9DC40">
    <property type="interactions" value="4"/>
</dbReference>
<dbReference type="MINT" id="Q9DC40"/>
<dbReference type="STRING" id="10090.ENSMUSP00000110835"/>
<dbReference type="GlyGen" id="Q9DC40">
    <property type="glycosylation" value="2 sites, 1 O-linked glycan (1 site)"/>
</dbReference>
<dbReference type="iPTMnet" id="Q9DC40"/>
<dbReference type="PhosphoSitePlus" id="Q9DC40"/>
<dbReference type="PaxDb" id="10090-ENSMUSP00000110835"/>
<dbReference type="PeptideAtlas" id="Q9DC40"/>
<dbReference type="ProteomicsDB" id="262751">
    <molecule id="Q9DC40-1"/>
</dbReference>
<dbReference type="ProteomicsDB" id="262752">
    <molecule id="Q9DC40-2"/>
</dbReference>
<dbReference type="Pumba" id="Q9DC40"/>
<dbReference type="Antibodypedia" id="23134">
    <property type="antibodies" value="124 antibodies from 22 providers"/>
</dbReference>
<dbReference type="Ensembl" id="ENSMUST00000024987.6">
    <molecule id="Q9DC40-1"/>
    <property type="protein sequence ID" value="ENSMUSP00000024987.6"/>
    <property type="gene ID" value="ENSMUSG00000024170.16"/>
</dbReference>
<dbReference type="Ensembl" id="ENSMUST00000115181.9">
    <molecule id="Q9DC40-1"/>
    <property type="protein sequence ID" value="ENSMUSP00000110835.3"/>
    <property type="gene ID" value="ENSMUSG00000024170.16"/>
</dbReference>
<dbReference type="GeneID" id="71718"/>
<dbReference type="KEGG" id="mmu:71718"/>
<dbReference type="UCSC" id="uc008azq.2">
    <molecule id="Q9DC40-1"/>
    <property type="organism name" value="mouse"/>
</dbReference>
<dbReference type="AGR" id="MGI:1918968"/>
<dbReference type="CTD" id="9894"/>
<dbReference type="MGI" id="MGI:1918968">
    <property type="gene designation" value="Telo2"/>
</dbReference>
<dbReference type="VEuPathDB" id="HostDB:ENSMUSG00000024170"/>
<dbReference type="eggNOG" id="KOG4346">
    <property type="taxonomic scope" value="Eukaryota"/>
</dbReference>
<dbReference type="GeneTree" id="ENSGT00390000006698"/>
<dbReference type="HOGENOM" id="CLU_008764_1_0_1"/>
<dbReference type="InParanoid" id="Q9DC40"/>
<dbReference type="OMA" id="FYPQNYF"/>
<dbReference type="OrthoDB" id="10258062at2759"/>
<dbReference type="PhylomeDB" id="Q9DC40"/>
<dbReference type="TreeFam" id="TF313925"/>
<dbReference type="BioGRID-ORCS" id="71718">
    <property type="hits" value="23 hits in 79 CRISPR screens"/>
</dbReference>
<dbReference type="ChiTaRS" id="Telo2">
    <property type="organism name" value="mouse"/>
</dbReference>
<dbReference type="EvolutionaryTrace" id="Q9DC40"/>
<dbReference type="PRO" id="PR:Q9DC40"/>
<dbReference type="Proteomes" id="UP000000589">
    <property type="component" value="Chromosome 17"/>
</dbReference>
<dbReference type="RNAct" id="Q9DC40">
    <property type="molecule type" value="protein"/>
</dbReference>
<dbReference type="Bgee" id="ENSMUSG00000024170">
    <property type="expression patterns" value="Expressed in molar tooth and 241 other cell types or tissues"/>
</dbReference>
<dbReference type="GO" id="GO:0000781">
    <property type="term" value="C:chromosome, telomeric region"/>
    <property type="evidence" value="ECO:0007669"/>
    <property type="project" value="UniProtKB-SubCell"/>
</dbReference>
<dbReference type="GO" id="GO:0005737">
    <property type="term" value="C:cytoplasm"/>
    <property type="evidence" value="ECO:0000250"/>
    <property type="project" value="UniProtKB"/>
</dbReference>
<dbReference type="GO" id="GO:0005829">
    <property type="term" value="C:cytosol"/>
    <property type="evidence" value="ECO:0007669"/>
    <property type="project" value="Ensembl"/>
</dbReference>
<dbReference type="GO" id="GO:0016020">
    <property type="term" value="C:membrane"/>
    <property type="evidence" value="ECO:0007669"/>
    <property type="project" value="UniProtKB-SubCell"/>
</dbReference>
<dbReference type="GO" id="GO:0016604">
    <property type="term" value="C:nuclear body"/>
    <property type="evidence" value="ECO:0007669"/>
    <property type="project" value="Ensembl"/>
</dbReference>
<dbReference type="GO" id="GO:0110078">
    <property type="term" value="C:TTT Hsp90 cochaperone complex"/>
    <property type="evidence" value="ECO:0007669"/>
    <property type="project" value="Ensembl"/>
</dbReference>
<dbReference type="GO" id="GO:0051879">
    <property type="term" value="F:Hsp90 protein binding"/>
    <property type="evidence" value="ECO:0007669"/>
    <property type="project" value="Ensembl"/>
</dbReference>
<dbReference type="GO" id="GO:0019900">
    <property type="term" value="F:kinase binding"/>
    <property type="evidence" value="ECO:0000266"/>
    <property type="project" value="MGI"/>
</dbReference>
<dbReference type="GO" id="GO:0060090">
    <property type="term" value="F:molecular adaptor activity"/>
    <property type="evidence" value="ECO:0000315"/>
    <property type="project" value="MGI"/>
</dbReference>
<dbReference type="GO" id="GO:0019901">
    <property type="term" value="F:protein kinase binding"/>
    <property type="evidence" value="ECO:0007669"/>
    <property type="project" value="Ensembl"/>
</dbReference>
<dbReference type="GO" id="GO:0044877">
    <property type="term" value="F:protein-containing complex binding"/>
    <property type="evidence" value="ECO:0000314"/>
    <property type="project" value="MGI"/>
</dbReference>
<dbReference type="GO" id="GO:0140777">
    <property type="term" value="F:protein-containing complex stabilizing activity"/>
    <property type="evidence" value="ECO:0000266"/>
    <property type="project" value="MGI"/>
</dbReference>
<dbReference type="GO" id="GO:0050821">
    <property type="term" value="P:protein stabilization"/>
    <property type="evidence" value="ECO:0000315"/>
    <property type="project" value="UniProtKB"/>
</dbReference>
<dbReference type="FunFam" id="1.25.40.720:FF:000001">
    <property type="entry name" value="Telomere length regulation protein TEL2"/>
    <property type="match status" value="1"/>
</dbReference>
<dbReference type="FunFam" id="1.25.40.720:FF:000003">
    <property type="entry name" value="Telomere length regulation protein TEL2 homolog"/>
    <property type="match status" value="1"/>
</dbReference>
<dbReference type="Gene3D" id="1.25.40.720">
    <property type="entry name" value="Telomere length regulation protein 2, C-terminal domain"/>
    <property type="match status" value="2"/>
</dbReference>
<dbReference type="InterPro" id="IPR038528">
    <property type="entry name" value="TEL2_C_sf"/>
</dbReference>
<dbReference type="InterPro" id="IPR051970">
    <property type="entry name" value="TEL2_Regulation"/>
</dbReference>
<dbReference type="InterPro" id="IPR019337">
    <property type="entry name" value="Telomere_length_regulation_dom"/>
</dbReference>
<dbReference type="PANTHER" id="PTHR15830">
    <property type="entry name" value="TELOMERE LENGTH REGULATION PROTEIN TEL2 FAMILY MEMBER"/>
    <property type="match status" value="1"/>
</dbReference>
<dbReference type="PANTHER" id="PTHR15830:SF10">
    <property type="entry name" value="TELOMERE LENGTH REGULATION PROTEIN TEL2 HOMOLOG"/>
    <property type="match status" value="1"/>
</dbReference>
<dbReference type="Pfam" id="PF25320">
    <property type="entry name" value="TELO2_ARM"/>
    <property type="match status" value="1"/>
</dbReference>
<dbReference type="Pfam" id="PF10193">
    <property type="entry name" value="Telomere_reg-2"/>
    <property type="match status" value="1"/>
</dbReference>
<protein>
    <recommendedName>
        <fullName>Telomere length regulation protein TEL2 homolog</fullName>
    </recommendedName>
</protein>
<keyword id="KW-0002">3D-structure</keyword>
<keyword id="KW-0007">Acetylation</keyword>
<keyword id="KW-0025">Alternative splicing</keyword>
<keyword id="KW-0158">Chromosome</keyword>
<keyword id="KW-0963">Cytoplasm</keyword>
<keyword id="KW-0379">Hydroxylation</keyword>
<keyword id="KW-0472">Membrane</keyword>
<keyword id="KW-0539">Nucleus</keyword>
<keyword id="KW-0597">Phosphoprotein</keyword>
<keyword id="KW-1185">Reference proteome</keyword>
<keyword id="KW-0779">Telomere</keyword>
<keyword id="KW-0832">Ubl conjugation</keyword>
<feature type="chain" id="PRO_0000318516" description="Telomere length regulation protein TEL2 homolog">
    <location>
        <begin position="1"/>
        <end position="840"/>
    </location>
</feature>
<feature type="region of interest" description="Disordered" evidence="3">
    <location>
        <begin position="443"/>
        <end position="497"/>
    </location>
</feature>
<feature type="compositionally biased region" description="Acidic residues" evidence="3">
    <location>
        <begin position="488"/>
        <end position="497"/>
    </location>
</feature>
<feature type="site" description="Interaction with PIH1D1" evidence="5">
    <location>
        <position position="491"/>
    </location>
</feature>
<feature type="site" description="Interaction with PIH1D1" evidence="5">
    <location>
        <position position="492"/>
    </location>
</feature>
<feature type="site" description="Interaction with PIH1D1" evidence="5">
    <location>
        <position position="493"/>
    </location>
</feature>
<feature type="modified residue" description="N-acetylmethionine" evidence="2">
    <location>
        <position position="1"/>
    </location>
</feature>
<feature type="modified residue" description="Hydroxyproline" evidence="1">
    <location>
        <position position="374"/>
    </location>
</feature>
<feature type="modified residue" description="Hydroxyproline" evidence="1">
    <location>
        <position position="419"/>
    </location>
</feature>
<feature type="modified residue" description="Hydroxyproline" evidence="1">
    <location>
        <position position="422"/>
    </location>
</feature>
<feature type="modified residue" description="Phosphoserine" evidence="8">
    <location>
        <position position="457"/>
    </location>
</feature>
<feature type="modified residue" description="Phosphoserine; by CK2" evidence="2">
    <location>
        <position position="486"/>
    </location>
</feature>
<feature type="modified residue" description="Phosphoserine" evidence="2">
    <location>
        <position position="488"/>
    </location>
</feature>
<feature type="modified residue" description="Phosphoserine" evidence="2">
    <location>
        <position position="492"/>
    </location>
</feature>
<feature type="modified residue" description="Phosphoserine" evidence="2">
    <location>
        <position position="837"/>
    </location>
</feature>
<feature type="splice variant" id="VSP_031207" description="In isoform 2." evidence="6">
    <location>
        <begin position="1"/>
        <end position="386"/>
    </location>
</feature>
<feature type="splice variant" id="VSP_031208" description="In isoform 2." evidence="6">
    <original>GCPQRELSGVP</original>
    <variation>VTGLCSDPMLS</variation>
    <location>
        <begin position="680"/>
        <end position="690"/>
    </location>
</feature>
<feature type="splice variant" id="VSP_031209" description="In isoform 2." evidence="6">
    <location>
        <begin position="691"/>
        <end position="840"/>
    </location>
</feature>
<feature type="mutagenesis site" description="Does not inhibit interaction with TTI1 or TTI2. Inhibits weakly interaction with TTI1 or TTI2; when associated with E-407 or R-424. Inhibits interaction with TTI1 or TTI2; when associated with E-407 and R-424." evidence="4">
    <original>L</original>
    <variation>Q</variation>
    <location>
        <position position="395"/>
    </location>
</feature>
<feature type="mutagenesis site" description="Does not inhibit interaction with TTI1 or TTI2. Inhibits weakly interaction with TTI1 or TTI2; when associated with Q-395 or R-424. Inhibits interaction with TTI1 or TTI2; when associated with Q-395 and R-424." evidence="4">
    <original>M</original>
    <variation>E</variation>
    <location>
        <position position="407"/>
    </location>
</feature>
<feature type="mutagenesis site" description="Does not inhibit interaction with TTI1 or TTI2. Inhibits weakly interaction with TTI1 or TTI2; when associated with Q-395 or E-407. Inhibits interaction with TTI1 or TTI2; when associated with Q-395 and E-407." evidence="4">
    <original>L</original>
    <variation>R</variation>
    <location>
        <position position="424"/>
    </location>
</feature>
<feature type="sequence conflict" description="In Ref. 2; AAS21644 and 3; AAH11077." evidence="7" ref="2 3">
    <original>I</original>
    <variation>T</variation>
    <location>
        <position position="18"/>
    </location>
</feature>
<feature type="sequence conflict" description="In Ref. 1; BAE32791." evidence="7" ref="1">
    <original>A</original>
    <variation>T</variation>
    <location>
        <position position="106"/>
    </location>
</feature>
<feature type="sequence conflict" description="In Ref. 2; AAS21644 and 3; AAH11077." evidence="7" ref="2 3">
    <original>D</original>
    <variation>G</variation>
    <location>
        <position position="205"/>
    </location>
</feature>
<feature type="sequence conflict" description="In Ref. 2; AAS21644 and 3; AAH11077." evidence="7" ref="2 3">
    <original>V</original>
    <variation>A</variation>
    <location>
        <position position="461"/>
    </location>
</feature>
<feature type="sequence conflict" description="In Ref. 2; AAS21644 and 3; AAH11077." evidence="7" ref="2 3">
    <original>S</original>
    <variation>P</variation>
    <location>
        <position position="465"/>
    </location>
</feature>
<feature type="sequence conflict" description="In Ref. 2; AAS21644 and 3; AAH11077." evidence="7" ref="2 3">
    <original>S</original>
    <variation>N</variation>
    <location>
        <position position="509"/>
    </location>
</feature>
<feature type="sequence conflict" description="In Ref. 2; AAS21644 and 3; AAH11077." evidence="7" ref="2 3">
    <original>T</original>
    <variation>A</variation>
    <location>
        <position position="548"/>
    </location>
</feature>
<feature type="sequence conflict" description="In Ref. 2; AAS21644 and 3; AAH11077." evidence="7" ref="2 3">
    <original>PP</original>
    <variation>SL</variation>
    <location>
        <begin position="638"/>
        <end position="639"/>
    </location>
</feature>
<feature type="sequence conflict" description="In Ref. 2; AAS21644 and 3; AAH11077." evidence="7" ref="2 3">
    <original>V</original>
    <variation>M</variation>
    <location>
        <position position="664"/>
    </location>
</feature>
<feature type="sequence conflict" description="In Ref. 1; BAC26051." evidence="7" ref="1">
    <original>V</original>
    <variation>I</variation>
    <location>
        <position position="689"/>
    </location>
</feature>
<feature type="sequence conflict" description="In Ref. 1; BAB23388." evidence="7" ref="1">
    <original>V</original>
    <variation>M</variation>
    <location>
        <position position="775"/>
    </location>
</feature>
<feature type="helix" evidence="9">
    <location>
        <begin position="492"/>
        <end position="494"/>
    </location>
</feature>